<gene>
    <name type="primary">argS</name>
    <name type="ordered locus">BSU37330</name>
</gene>
<feature type="chain" id="PRO_0000151530" description="Arginine--tRNA ligase">
    <location>
        <begin position="1"/>
        <end position="556"/>
    </location>
</feature>
<feature type="short sequence motif" description="'HIGH' region">
    <location>
        <begin position="132"/>
        <end position="142"/>
    </location>
</feature>
<name>SYR_BACSU</name>
<reference key="1">
    <citation type="journal article" date="1997" name="Microbiology">
        <title>The Bacillus subtilis genome from gerBC (311 degrees) to licR (334 degrees).</title>
        <authorList>
            <person name="Presecan E."/>
            <person name="Moszer I."/>
            <person name="Boursier L."/>
            <person name="Cruz Ramos H."/>
            <person name="De La Fuente V."/>
            <person name="Hullo M.-F."/>
            <person name="Lelong C."/>
            <person name="Schleich S."/>
            <person name="Sekowska A."/>
            <person name="Song B.H."/>
            <person name="Villani G."/>
            <person name="Kunst F."/>
            <person name="Danchin A."/>
            <person name="Glaser P."/>
        </authorList>
    </citation>
    <scope>NUCLEOTIDE SEQUENCE [GENOMIC DNA]</scope>
    <source>
        <strain>168</strain>
    </source>
</reference>
<reference key="2">
    <citation type="journal article" date="1997" name="Nature">
        <title>The complete genome sequence of the Gram-positive bacterium Bacillus subtilis.</title>
        <authorList>
            <person name="Kunst F."/>
            <person name="Ogasawara N."/>
            <person name="Moszer I."/>
            <person name="Albertini A.M."/>
            <person name="Alloni G."/>
            <person name="Azevedo V."/>
            <person name="Bertero M.G."/>
            <person name="Bessieres P."/>
            <person name="Bolotin A."/>
            <person name="Borchert S."/>
            <person name="Borriss R."/>
            <person name="Boursier L."/>
            <person name="Brans A."/>
            <person name="Braun M."/>
            <person name="Brignell S.C."/>
            <person name="Bron S."/>
            <person name="Brouillet S."/>
            <person name="Bruschi C.V."/>
            <person name="Caldwell B."/>
            <person name="Capuano V."/>
            <person name="Carter N.M."/>
            <person name="Choi S.-K."/>
            <person name="Codani J.-J."/>
            <person name="Connerton I.F."/>
            <person name="Cummings N.J."/>
            <person name="Daniel R.A."/>
            <person name="Denizot F."/>
            <person name="Devine K.M."/>
            <person name="Duesterhoeft A."/>
            <person name="Ehrlich S.D."/>
            <person name="Emmerson P.T."/>
            <person name="Entian K.-D."/>
            <person name="Errington J."/>
            <person name="Fabret C."/>
            <person name="Ferrari E."/>
            <person name="Foulger D."/>
            <person name="Fritz C."/>
            <person name="Fujita M."/>
            <person name="Fujita Y."/>
            <person name="Fuma S."/>
            <person name="Galizzi A."/>
            <person name="Galleron N."/>
            <person name="Ghim S.-Y."/>
            <person name="Glaser P."/>
            <person name="Goffeau A."/>
            <person name="Golightly E.J."/>
            <person name="Grandi G."/>
            <person name="Guiseppi G."/>
            <person name="Guy B.J."/>
            <person name="Haga K."/>
            <person name="Haiech J."/>
            <person name="Harwood C.R."/>
            <person name="Henaut A."/>
            <person name="Hilbert H."/>
            <person name="Holsappel S."/>
            <person name="Hosono S."/>
            <person name="Hullo M.-F."/>
            <person name="Itaya M."/>
            <person name="Jones L.-M."/>
            <person name="Joris B."/>
            <person name="Karamata D."/>
            <person name="Kasahara Y."/>
            <person name="Klaerr-Blanchard M."/>
            <person name="Klein C."/>
            <person name="Kobayashi Y."/>
            <person name="Koetter P."/>
            <person name="Koningstein G."/>
            <person name="Krogh S."/>
            <person name="Kumano M."/>
            <person name="Kurita K."/>
            <person name="Lapidus A."/>
            <person name="Lardinois S."/>
            <person name="Lauber J."/>
            <person name="Lazarevic V."/>
            <person name="Lee S.-M."/>
            <person name="Levine A."/>
            <person name="Liu H."/>
            <person name="Masuda S."/>
            <person name="Mauel C."/>
            <person name="Medigue C."/>
            <person name="Medina N."/>
            <person name="Mellado R.P."/>
            <person name="Mizuno M."/>
            <person name="Moestl D."/>
            <person name="Nakai S."/>
            <person name="Noback M."/>
            <person name="Noone D."/>
            <person name="O'Reilly M."/>
            <person name="Ogawa K."/>
            <person name="Ogiwara A."/>
            <person name="Oudega B."/>
            <person name="Park S.-H."/>
            <person name="Parro V."/>
            <person name="Pohl T.M."/>
            <person name="Portetelle D."/>
            <person name="Porwollik S."/>
            <person name="Prescott A.M."/>
            <person name="Presecan E."/>
            <person name="Pujic P."/>
            <person name="Purnelle B."/>
            <person name="Rapoport G."/>
            <person name="Rey M."/>
            <person name="Reynolds S."/>
            <person name="Rieger M."/>
            <person name="Rivolta C."/>
            <person name="Rocha E."/>
            <person name="Roche B."/>
            <person name="Rose M."/>
            <person name="Sadaie Y."/>
            <person name="Sato T."/>
            <person name="Scanlan E."/>
            <person name="Schleich S."/>
            <person name="Schroeter R."/>
            <person name="Scoffone F."/>
            <person name="Sekiguchi J."/>
            <person name="Sekowska A."/>
            <person name="Seror S.J."/>
            <person name="Serror P."/>
            <person name="Shin B.-S."/>
            <person name="Soldo B."/>
            <person name="Sorokin A."/>
            <person name="Tacconi E."/>
            <person name="Takagi T."/>
            <person name="Takahashi H."/>
            <person name="Takemaru K."/>
            <person name="Takeuchi M."/>
            <person name="Tamakoshi A."/>
            <person name="Tanaka T."/>
            <person name="Terpstra P."/>
            <person name="Tognoni A."/>
            <person name="Tosato V."/>
            <person name="Uchiyama S."/>
            <person name="Vandenbol M."/>
            <person name="Vannier F."/>
            <person name="Vassarotti A."/>
            <person name="Viari A."/>
            <person name="Wambutt R."/>
            <person name="Wedler E."/>
            <person name="Wedler H."/>
            <person name="Weitzenegger T."/>
            <person name="Winters P."/>
            <person name="Wipat A."/>
            <person name="Yamamoto H."/>
            <person name="Yamane K."/>
            <person name="Yasumoto K."/>
            <person name="Yata K."/>
            <person name="Yoshida K."/>
            <person name="Yoshikawa H.-F."/>
            <person name="Zumstein E."/>
            <person name="Yoshikawa H."/>
            <person name="Danchin A."/>
        </authorList>
    </citation>
    <scope>NUCLEOTIDE SEQUENCE [LARGE SCALE GENOMIC DNA]</scope>
    <source>
        <strain>168</strain>
    </source>
</reference>
<reference key="3">
    <citation type="journal article" date="1995" name="EMBO J.">
        <title>Anaerobic transcription activation in Bacillus subtilis: identification of distinct FNR-dependent and -independent regulatory mechanisms.</title>
        <authorList>
            <person name="Cruz Ramos H."/>
            <person name="Boursier L."/>
            <person name="Moszer I."/>
            <person name="Kunst F."/>
            <person name="Danchin A."/>
            <person name="Glaser P."/>
        </authorList>
    </citation>
    <scope>NUCLEOTIDE SEQUENCE [GENOMIC DNA] OF 442-556</scope>
    <source>
        <strain>168</strain>
    </source>
</reference>
<protein>
    <recommendedName>
        <fullName>Arginine--tRNA ligase</fullName>
        <ecNumber>6.1.1.19</ecNumber>
    </recommendedName>
    <alternativeName>
        <fullName>Arginyl-tRNA synthetase</fullName>
        <shortName>ArgRS</shortName>
    </alternativeName>
</protein>
<proteinExistence type="inferred from homology"/>
<accession>P46906</accession>
<dbReference type="EC" id="6.1.1.19"/>
<dbReference type="EMBL" id="Z97024">
    <property type="protein sequence ID" value="CAB09703.1"/>
    <property type="molecule type" value="Genomic_DNA"/>
</dbReference>
<dbReference type="EMBL" id="AL009126">
    <property type="protein sequence ID" value="CAB15761.1"/>
    <property type="molecule type" value="Genomic_DNA"/>
</dbReference>
<dbReference type="EMBL" id="Z49884">
    <property type="protein sequence ID" value="CAA90040.1"/>
    <property type="molecule type" value="Genomic_DNA"/>
</dbReference>
<dbReference type="PIR" id="E69589">
    <property type="entry name" value="E69589"/>
</dbReference>
<dbReference type="RefSeq" id="NP_391614.1">
    <property type="nucleotide sequence ID" value="NC_000964.3"/>
</dbReference>
<dbReference type="RefSeq" id="WP_003227570.1">
    <property type="nucleotide sequence ID" value="NZ_OZ025638.1"/>
</dbReference>
<dbReference type="SMR" id="P46906"/>
<dbReference type="FunCoup" id="P46906">
    <property type="interactions" value="667"/>
</dbReference>
<dbReference type="IntAct" id="P46906">
    <property type="interactions" value="1"/>
</dbReference>
<dbReference type="MINT" id="P46906"/>
<dbReference type="STRING" id="224308.BSU37330"/>
<dbReference type="jPOST" id="P46906"/>
<dbReference type="PaxDb" id="224308-BSU37330"/>
<dbReference type="DNASU" id="937054"/>
<dbReference type="EnsemblBacteria" id="CAB15761">
    <property type="protein sequence ID" value="CAB15761"/>
    <property type="gene ID" value="BSU_37330"/>
</dbReference>
<dbReference type="GeneID" id="937054"/>
<dbReference type="KEGG" id="bsu:BSU37330"/>
<dbReference type="PATRIC" id="fig|224308.179.peg.4044"/>
<dbReference type="eggNOG" id="COG0018">
    <property type="taxonomic scope" value="Bacteria"/>
</dbReference>
<dbReference type="InParanoid" id="P46906"/>
<dbReference type="OrthoDB" id="9805987at2"/>
<dbReference type="PhylomeDB" id="P46906"/>
<dbReference type="BioCyc" id="BSUB:BSU37330-MONOMER"/>
<dbReference type="Proteomes" id="UP000001570">
    <property type="component" value="Chromosome"/>
</dbReference>
<dbReference type="GO" id="GO:0005737">
    <property type="term" value="C:cytoplasm"/>
    <property type="evidence" value="ECO:0007669"/>
    <property type="project" value="UniProtKB-SubCell"/>
</dbReference>
<dbReference type="GO" id="GO:0004814">
    <property type="term" value="F:arginine-tRNA ligase activity"/>
    <property type="evidence" value="ECO:0000318"/>
    <property type="project" value="GO_Central"/>
</dbReference>
<dbReference type="GO" id="GO:0005524">
    <property type="term" value="F:ATP binding"/>
    <property type="evidence" value="ECO:0007669"/>
    <property type="project" value="UniProtKB-UniRule"/>
</dbReference>
<dbReference type="GO" id="GO:0006420">
    <property type="term" value="P:arginyl-tRNA aminoacylation"/>
    <property type="evidence" value="ECO:0000318"/>
    <property type="project" value="GO_Central"/>
</dbReference>
<dbReference type="CDD" id="cd07956">
    <property type="entry name" value="Anticodon_Ia_Arg"/>
    <property type="match status" value="1"/>
</dbReference>
<dbReference type="CDD" id="cd00671">
    <property type="entry name" value="ArgRS_core"/>
    <property type="match status" value="1"/>
</dbReference>
<dbReference type="FunFam" id="1.10.730.10:FF:000008">
    <property type="entry name" value="Arginine--tRNA ligase"/>
    <property type="match status" value="1"/>
</dbReference>
<dbReference type="FunFam" id="3.30.1360.70:FF:000003">
    <property type="entry name" value="Arginine--tRNA ligase"/>
    <property type="match status" value="1"/>
</dbReference>
<dbReference type="FunFam" id="3.40.50.620:FF:000062">
    <property type="entry name" value="Arginine--tRNA ligase"/>
    <property type="match status" value="1"/>
</dbReference>
<dbReference type="Gene3D" id="3.30.1360.70">
    <property type="entry name" value="Arginyl tRNA synthetase N-terminal domain"/>
    <property type="match status" value="1"/>
</dbReference>
<dbReference type="Gene3D" id="3.40.50.620">
    <property type="entry name" value="HUPs"/>
    <property type="match status" value="1"/>
</dbReference>
<dbReference type="Gene3D" id="1.10.730.10">
    <property type="entry name" value="Isoleucyl-tRNA Synthetase, Domain 1"/>
    <property type="match status" value="1"/>
</dbReference>
<dbReference type="HAMAP" id="MF_00123">
    <property type="entry name" value="Arg_tRNA_synth"/>
    <property type="match status" value="1"/>
</dbReference>
<dbReference type="InterPro" id="IPR001412">
    <property type="entry name" value="aa-tRNA-synth_I_CS"/>
</dbReference>
<dbReference type="InterPro" id="IPR001278">
    <property type="entry name" value="Arg-tRNA-ligase"/>
</dbReference>
<dbReference type="InterPro" id="IPR005148">
    <property type="entry name" value="Arg-tRNA-synth_N"/>
</dbReference>
<dbReference type="InterPro" id="IPR036695">
    <property type="entry name" value="Arg-tRNA-synth_N_sf"/>
</dbReference>
<dbReference type="InterPro" id="IPR035684">
    <property type="entry name" value="ArgRS_core"/>
</dbReference>
<dbReference type="InterPro" id="IPR008909">
    <property type="entry name" value="DALR_anticod-bd"/>
</dbReference>
<dbReference type="InterPro" id="IPR014729">
    <property type="entry name" value="Rossmann-like_a/b/a_fold"/>
</dbReference>
<dbReference type="InterPro" id="IPR009080">
    <property type="entry name" value="tRNAsynth_Ia_anticodon-bd"/>
</dbReference>
<dbReference type="NCBIfam" id="TIGR00456">
    <property type="entry name" value="argS"/>
    <property type="match status" value="1"/>
</dbReference>
<dbReference type="PANTHER" id="PTHR11956:SF5">
    <property type="entry name" value="ARGININE--TRNA LIGASE, CYTOPLASMIC"/>
    <property type="match status" value="1"/>
</dbReference>
<dbReference type="PANTHER" id="PTHR11956">
    <property type="entry name" value="ARGINYL-TRNA SYNTHETASE"/>
    <property type="match status" value="1"/>
</dbReference>
<dbReference type="Pfam" id="PF03485">
    <property type="entry name" value="Arg_tRNA_synt_N"/>
    <property type="match status" value="1"/>
</dbReference>
<dbReference type="Pfam" id="PF05746">
    <property type="entry name" value="DALR_1"/>
    <property type="match status" value="1"/>
</dbReference>
<dbReference type="Pfam" id="PF00750">
    <property type="entry name" value="tRNA-synt_1d"/>
    <property type="match status" value="1"/>
</dbReference>
<dbReference type="PRINTS" id="PR01038">
    <property type="entry name" value="TRNASYNTHARG"/>
</dbReference>
<dbReference type="SMART" id="SM01016">
    <property type="entry name" value="Arg_tRNA_synt_N"/>
    <property type="match status" value="1"/>
</dbReference>
<dbReference type="SMART" id="SM00836">
    <property type="entry name" value="DALR_1"/>
    <property type="match status" value="1"/>
</dbReference>
<dbReference type="SUPFAM" id="SSF47323">
    <property type="entry name" value="Anticodon-binding domain of a subclass of class I aminoacyl-tRNA synthetases"/>
    <property type="match status" value="1"/>
</dbReference>
<dbReference type="SUPFAM" id="SSF55190">
    <property type="entry name" value="Arginyl-tRNA synthetase (ArgRS), N-terminal 'additional' domain"/>
    <property type="match status" value="1"/>
</dbReference>
<dbReference type="SUPFAM" id="SSF52374">
    <property type="entry name" value="Nucleotidylyl transferase"/>
    <property type="match status" value="1"/>
</dbReference>
<dbReference type="PROSITE" id="PS00178">
    <property type="entry name" value="AA_TRNA_LIGASE_I"/>
    <property type="match status" value="1"/>
</dbReference>
<comment type="catalytic activity">
    <reaction>
        <text>tRNA(Arg) + L-arginine + ATP = L-arginyl-tRNA(Arg) + AMP + diphosphate</text>
        <dbReference type="Rhea" id="RHEA:20301"/>
        <dbReference type="Rhea" id="RHEA-COMP:9658"/>
        <dbReference type="Rhea" id="RHEA-COMP:9673"/>
        <dbReference type="ChEBI" id="CHEBI:30616"/>
        <dbReference type="ChEBI" id="CHEBI:32682"/>
        <dbReference type="ChEBI" id="CHEBI:33019"/>
        <dbReference type="ChEBI" id="CHEBI:78442"/>
        <dbReference type="ChEBI" id="CHEBI:78513"/>
        <dbReference type="ChEBI" id="CHEBI:456215"/>
        <dbReference type="EC" id="6.1.1.19"/>
    </reaction>
</comment>
<comment type="subunit">
    <text evidence="1">Monomer.</text>
</comment>
<comment type="subcellular location">
    <subcellularLocation>
        <location evidence="1">Cytoplasm</location>
    </subcellularLocation>
</comment>
<comment type="similarity">
    <text evidence="2">Belongs to the class-I aminoacyl-tRNA synthetase family.</text>
</comment>
<evidence type="ECO:0000250" key="1"/>
<evidence type="ECO:0000305" key="2"/>
<sequence length="556" mass="62723">MNIAEQMKDVLKEEIKAAVLKAGLAEESQIPNVVLETPKDKTHGDYSTNMAMQLARVAKKAPRQIAEEIVAHFDKGKASIEKLDIAGPGFINFYMNNQYLTKLIPSVLEAGEAYGETNIGNGERVQVEFVSANPTGDLHLGHARGAAVGDSLCNVLSKAGYDVSREYYINDAGNQINNLALSVEVRYFEALGLEKPMPEDGYRGEDIIAIGKRLAEEYGDRFVNEEESERLAFFREYGLKYELEKLRKDLENFRVPFDVWYSETSLYQNGKIDKALEALREKGHVYEEDGATWFRSTTFGDDKDRVLIKKDGTYTYLLPDIAYHKDKLDRGFDKLINVWGADHHGYIPRMKAAIEALGYEKGTLEVEIIQLVHLYKNGEKMKMSKRTGKAVTMRDLIEEVGLDAVRYFFAMRSADTHMDFDLDLAVSTSNENPVYYAQYAHARICSMLRQGEEQGLKPAADLDFSHIQSEKEYDLLKTIGGFPEAVAEAAEKRIPHRVTNYIYDLASALHSFYNAEKVIDPENEEKSRARLALMKATQITLNNALQLIGVSAPEKM</sequence>
<keyword id="KW-0030">Aminoacyl-tRNA synthetase</keyword>
<keyword id="KW-0067">ATP-binding</keyword>
<keyword id="KW-0963">Cytoplasm</keyword>
<keyword id="KW-0436">Ligase</keyword>
<keyword id="KW-0547">Nucleotide-binding</keyword>
<keyword id="KW-0648">Protein biosynthesis</keyword>
<keyword id="KW-1185">Reference proteome</keyword>
<organism>
    <name type="scientific">Bacillus subtilis (strain 168)</name>
    <dbReference type="NCBI Taxonomy" id="224308"/>
    <lineage>
        <taxon>Bacteria</taxon>
        <taxon>Bacillati</taxon>
        <taxon>Bacillota</taxon>
        <taxon>Bacilli</taxon>
        <taxon>Bacillales</taxon>
        <taxon>Bacillaceae</taxon>
        <taxon>Bacillus</taxon>
    </lineage>
</organism>